<proteinExistence type="evidence at protein level"/>
<organism>
    <name type="scientific">Arabidopsis thaliana</name>
    <name type="common">Mouse-ear cress</name>
    <dbReference type="NCBI Taxonomy" id="3702"/>
    <lineage>
        <taxon>Eukaryota</taxon>
        <taxon>Viridiplantae</taxon>
        <taxon>Streptophyta</taxon>
        <taxon>Embryophyta</taxon>
        <taxon>Tracheophyta</taxon>
        <taxon>Spermatophyta</taxon>
        <taxon>Magnoliopsida</taxon>
        <taxon>eudicotyledons</taxon>
        <taxon>Gunneridae</taxon>
        <taxon>Pentapetalae</taxon>
        <taxon>rosids</taxon>
        <taxon>malvids</taxon>
        <taxon>Brassicales</taxon>
        <taxon>Brassicaceae</taxon>
        <taxon>Camelineae</taxon>
        <taxon>Arabidopsis</taxon>
    </lineage>
</organism>
<accession>Q9ZW34</accession>
<sequence>MSVQEYLDKHMLSRKIEDAVNAAVRAKTSDPVLFIANHLKKAVSSVITKVKARQILDSRGIPTVEVDLHTNKGVFRASVPSGDSSGTYEAIELRDGDKGMYLGNSVAKAVKNINEKISEALIGMDPKLQGQIDQAMIDLDKTEKKSELGANAILAVSIAACKAGAAEKEVPLCKHLSDLSGRANMVLPVPAFTVLSGGKHASNTFAIQEIMILPIGASRFEEALQWGSETYHHLKAVISEKNGGLGCNVGEDGGLAPDISSLKEGLELVKEAINRTGYNDKIKIAIDIAATNFCLGTKYDLDIKSPNKSGQNFKSAEDMIDMYKEICNDYPIVSIEDPFDKEDWEHTKYFSSLGICQVVGDDLLMSNSKRVERAIQESSCNALLLKVNQIGTVTEAIEVVKMARDAQWGVVTSHRCGETEDSFISDLSVGLATGVIKAGAPCRGERTMKYNQLLRIEEELGDQAVYAGEDWKLSL</sequence>
<dbReference type="EC" id="4.2.1.11"/>
<dbReference type="EMBL" id="AC004561">
    <property type="protein sequence ID" value="AAC95183.1"/>
    <property type="molecule type" value="Genomic_DNA"/>
</dbReference>
<dbReference type="EMBL" id="CP002685">
    <property type="protein sequence ID" value="AEC08273.1"/>
    <property type="molecule type" value="Genomic_DNA"/>
</dbReference>
<dbReference type="EMBL" id="AY035128">
    <property type="protein sequence ID" value="AAK59633.1"/>
    <property type="molecule type" value="mRNA"/>
</dbReference>
<dbReference type="EMBL" id="AY113918">
    <property type="protein sequence ID" value="AAM44966.1"/>
    <property type="molecule type" value="mRNA"/>
</dbReference>
<dbReference type="PIR" id="G84697">
    <property type="entry name" value="G84697"/>
</dbReference>
<dbReference type="RefSeq" id="NP_180516.1">
    <property type="nucleotide sequence ID" value="NM_128509.4"/>
</dbReference>
<dbReference type="SMR" id="Q9ZW34"/>
<dbReference type="FunCoup" id="Q9ZW34">
    <property type="interactions" value="1454"/>
</dbReference>
<dbReference type="IntAct" id="Q9ZW34">
    <property type="interactions" value="1"/>
</dbReference>
<dbReference type="STRING" id="3702.Q9ZW34"/>
<dbReference type="iPTMnet" id="Q9ZW34"/>
<dbReference type="MetOSite" id="Q9ZW34"/>
<dbReference type="PaxDb" id="3702-AT2G29560.1"/>
<dbReference type="ProteomicsDB" id="220421"/>
<dbReference type="EnsemblPlants" id="AT2G29560.1">
    <property type="protein sequence ID" value="AT2G29560.1"/>
    <property type="gene ID" value="AT2G29560"/>
</dbReference>
<dbReference type="GeneID" id="817505"/>
<dbReference type="Gramene" id="AT2G29560.1">
    <property type="protein sequence ID" value="AT2G29560.1"/>
    <property type="gene ID" value="AT2G29560"/>
</dbReference>
<dbReference type="KEGG" id="ath:AT2G29560"/>
<dbReference type="Araport" id="AT2G29560"/>
<dbReference type="TAIR" id="AT2G29560">
    <property type="gene designation" value="ENOC"/>
</dbReference>
<dbReference type="eggNOG" id="KOG2670">
    <property type="taxonomic scope" value="Eukaryota"/>
</dbReference>
<dbReference type="HOGENOM" id="CLU_031223_2_1_1"/>
<dbReference type="InParanoid" id="Q9ZW34"/>
<dbReference type="OMA" id="KMARDAQ"/>
<dbReference type="OrthoDB" id="1739814at2759"/>
<dbReference type="PhylomeDB" id="Q9ZW34"/>
<dbReference type="BioCyc" id="ARA:AT2G29560-MONOMER"/>
<dbReference type="UniPathway" id="UPA00109">
    <property type="reaction ID" value="UER00187"/>
</dbReference>
<dbReference type="PRO" id="PR:Q9ZW34"/>
<dbReference type="Proteomes" id="UP000006548">
    <property type="component" value="Chromosome 2"/>
</dbReference>
<dbReference type="ExpressionAtlas" id="Q9ZW34">
    <property type="expression patterns" value="baseline and differential"/>
</dbReference>
<dbReference type="GO" id="GO:0005737">
    <property type="term" value="C:cytoplasm"/>
    <property type="evidence" value="ECO:0000314"/>
    <property type="project" value="TAIR"/>
</dbReference>
<dbReference type="GO" id="GO:0005829">
    <property type="term" value="C:cytosol"/>
    <property type="evidence" value="ECO:0007005"/>
    <property type="project" value="TAIR"/>
</dbReference>
<dbReference type="GO" id="GO:0005634">
    <property type="term" value="C:nucleus"/>
    <property type="evidence" value="ECO:0000314"/>
    <property type="project" value="TAIR"/>
</dbReference>
<dbReference type="GO" id="GO:0005777">
    <property type="term" value="C:peroxisome"/>
    <property type="evidence" value="ECO:0007005"/>
    <property type="project" value="TAIR"/>
</dbReference>
<dbReference type="GO" id="GO:0000015">
    <property type="term" value="C:phosphopyruvate hydratase complex"/>
    <property type="evidence" value="ECO:0007669"/>
    <property type="project" value="InterPro"/>
</dbReference>
<dbReference type="GO" id="GO:0000287">
    <property type="term" value="F:magnesium ion binding"/>
    <property type="evidence" value="ECO:0007669"/>
    <property type="project" value="InterPro"/>
</dbReference>
<dbReference type="GO" id="GO:0004634">
    <property type="term" value="F:phosphopyruvate hydratase activity"/>
    <property type="evidence" value="ECO:0007669"/>
    <property type="project" value="UniProtKB-EC"/>
</dbReference>
<dbReference type="GO" id="GO:0006096">
    <property type="term" value="P:glycolytic process"/>
    <property type="evidence" value="ECO:0007669"/>
    <property type="project" value="UniProtKB-UniPathway"/>
</dbReference>
<dbReference type="CDD" id="cd22962">
    <property type="entry name" value="DD_AtENO3-like"/>
    <property type="match status" value="1"/>
</dbReference>
<dbReference type="CDD" id="cd03313">
    <property type="entry name" value="enolase"/>
    <property type="match status" value="1"/>
</dbReference>
<dbReference type="FunFam" id="3.30.390.10:FF:000001">
    <property type="entry name" value="Enolase"/>
    <property type="match status" value="1"/>
</dbReference>
<dbReference type="FunFam" id="3.20.20.120:FF:000002">
    <property type="entry name" value="Enolase 1"/>
    <property type="match status" value="1"/>
</dbReference>
<dbReference type="Gene3D" id="3.20.20.120">
    <property type="entry name" value="Enolase-like C-terminal domain"/>
    <property type="match status" value="1"/>
</dbReference>
<dbReference type="Gene3D" id="3.30.390.10">
    <property type="entry name" value="Enolase-like, N-terminal domain"/>
    <property type="match status" value="1"/>
</dbReference>
<dbReference type="HAMAP" id="MF_00318">
    <property type="entry name" value="Enolase"/>
    <property type="match status" value="1"/>
</dbReference>
<dbReference type="InterPro" id="IPR000941">
    <property type="entry name" value="Enolase"/>
</dbReference>
<dbReference type="InterPro" id="IPR036849">
    <property type="entry name" value="Enolase-like_C_sf"/>
</dbReference>
<dbReference type="InterPro" id="IPR029017">
    <property type="entry name" value="Enolase-like_N"/>
</dbReference>
<dbReference type="InterPro" id="IPR020810">
    <property type="entry name" value="Enolase_C"/>
</dbReference>
<dbReference type="InterPro" id="IPR020809">
    <property type="entry name" value="Enolase_CS"/>
</dbReference>
<dbReference type="InterPro" id="IPR020811">
    <property type="entry name" value="Enolase_N"/>
</dbReference>
<dbReference type="NCBIfam" id="TIGR01060">
    <property type="entry name" value="eno"/>
    <property type="match status" value="1"/>
</dbReference>
<dbReference type="PANTHER" id="PTHR11902:SF56">
    <property type="entry name" value="CYTOSOLIC ENOLASE 3"/>
    <property type="match status" value="1"/>
</dbReference>
<dbReference type="PANTHER" id="PTHR11902">
    <property type="entry name" value="ENOLASE"/>
    <property type="match status" value="1"/>
</dbReference>
<dbReference type="Pfam" id="PF00113">
    <property type="entry name" value="Enolase_C"/>
    <property type="match status" value="1"/>
</dbReference>
<dbReference type="Pfam" id="PF03952">
    <property type="entry name" value="Enolase_N"/>
    <property type="match status" value="1"/>
</dbReference>
<dbReference type="PIRSF" id="PIRSF001400">
    <property type="entry name" value="Enolase"/>
    <property type="match status" value="1"/>
</dbReference>
<dbReference type="PRINTS" id="PR00148">
    <property type="entry name" value="ENOLASE"/>
</dbReference>
<dbReference type="SFLD" id="SFLDS00001">
    <property type="entry name" value="Enolase"/>
    <property type="match status" value="1"/>
</dbReference>
<dbReference type="SMART" id="SM01192">
    <property type="entry name" value="Enolase_C"/>
    <property type="match status" value="1"/>
</dbReference>
<dbReference type="SMART" id="SM01193">
    <property type="entry name" value="Enolase_N"/>
    <property type="match status" value="1"/>
</dbReference>
<dbReference type="SUPFAM" id="SSF51604">
    <property type="entry name" value="Enolase C-terminal domain-like"/>
    <property type="match status" value="1"/>
</dbReference>
<dbReference type="SUPFAM" id="SSF54826">
    <property type="entry name" value="Enolase N-terminal domain-like"/>
    <property type="match status" value="1"/>
</dbReference>
<dbReference type="PROSITE" id="PS00164">
    <property type="entry name" value="ENOLASE"/>
    <property type="match status" value="1"/>
</dbReference>
<protein>
    <recommendedName>
        <fullName>Cytosolic enolase 3</fullName>
        <ecNumber>4.2.1.11</ecNumber>
    </recommendedName>
    <alternativeName>
        <fullName>2-phospho-D-glycerate hydro-lyase 3</fullName>
    </alternativeName>
    <alternativeName>
        <fullName>2-phosphoglycerate dehydratase 3</fullName>
    </alternativeName>
</protein>
<reference key="1">
    <citation type="journal article" date="1999" name="Nature">
        <title>Sequence and analysis of chromosome 2 of the plant Arabidopsis thaliana.</title>
        <authorList>
            <person name="Lin X."/>
            <person name="Kaul S."/>
            <person name="Rounsley S.D."/>
            <person name="Shea T.P."/>
            <person name="Benito M.-I."/>
            <person name="Town C.D."/>
            <person name="Fujii C.Y."/>
            <person name="Mason T.M."/>
            <person name="Bowman C.L."/>
            <person name="Barnstead M.E."/>
            <person name="Feldblyum T.V."/>
            <person name="Buell C.R."/>
            <person name="Ketchum K.A."/>
            <person name="Lee J.J."/>
            <person name="Ronning C.M."/>
            <person name="Koo H.L."/>
            <person name="Moffat K.S."/>
            <person name="Cronin L.A."/>
            <person name="Shen M."/>
            <person name="Pai G."/>
            <person name="Van Aken S."/>
            <person name="Umayam L."/>
            <person name="Tallon L.J."/>
            <person name="Gill J.E."/>
            <person name="Adams M.D."/>
            <person name="Carrera A.J."/>
            <person name="Creasy T.H."/>
            <person name="Goodman H.M."/>
            <person name="Somerville C.R."/>
            <person name="Copenhaver G.P."/>
            <person name="Preuss D."/>
            <person name="Nierman W.C."/>
            <person name="White O."/>
            <person name="Eisen J.A."/>
            <person name="Salzberg S.L."/>
            <person name="Fraser C.M."/>
            <person name="Venter J.C."/>
        </authorList>
    </citation>
    <scope>NUCLEOTIDE SEQUENCE [LARGE SCALE GENOMIC DNA]</scope>
    <source>
        <strain>cv. Columbia</strain>
    </source>
</reference>
<reference key="2">
    <citation type="journal article" date="2017" name="Plant J.">
        <title>Araport11: a complete reannotation of the Arabidopsis thaliana reference genome.</title>
        <authorList>
            <person name="Cheng C.Y."/>
            <person name="Krishnakumar V."/>
            <person name="Chan A.P."/>
            <person name="Thibaud-Nissen F."/>
            <person name="Schobel S."/>
            <person name="Town C.D."/>
        </authorList>
    </citation>
    <scope>GENOME REANNOTATION</scope>
    <source>
        <strain>cv. Columbia</strain>
    </source>
</reference>
<reference key="3">
    <citation type="journal article" date="2003" name="Science">
        <title>Empirical analysis of transcriptional activity in the Arabidopsis genome.</title>
        <authorList>
            <person name="Yamada K."/>
            <person name="Lim J."/>
            <person name="Dale J.M."/>
            <person name="Chen H."/>
            <person name="Shinn P."/>
            <person name="Palm C.J."/>
            <person name="Southwick A.M."/>
            <person name="Wu H.C."/>
            <person name="Kim C.J."/>
            <person name="Nguyen M."/>
            <person name="Pham P.K."/>
            <person name="Cheuk R.F."/>
            <person name="Karlin-Newmann G."/>
            <person name="Liu S.X."/>
            <person name="Lam B."/>
            <person name="Sakano H."/>
            <person name="Wu T."/>
            <person name="Yu G."/>
            <person name="Miranda M."/>
            <person name="Quach H.L."/>
            <person name="Tripp M."/>
            <person name="Chang C.H."/>
            <person name="Lee J.M."/>
            <person name="Toriumi M.J."/>
            <person name="Chan M.M."/>
            <person name="Tang C.C."/>
            <person name="Onodera C.S."/>
            <person name="Deng J.M."/>
            <person name="Akiyama K."/>
            <person name="Ansari Y."/>
            <person name="Arakawa T."/>
            <person name="Banh J."/>
            <person name="Banno F."/>
            <person name="Bowser L."/>
            <person name="Brooks S.Y."/>
            <person name="Carninci P."/>
            <person name="Chao Q."/>
            <person name="Choy N."/>
            <person name="Enju A."/>
            <person name="Goldsmith A.D."/>
            <person name="Gurjal M."/>
            <person name="Hansen N.F."/>
            <person name="Hayashizaki Y."/>
            <person name="Johnson-Hopson C."/>
            <person name="Hsuan V.W."/>
            <person name="Iida K."/>
            <person name="Karnes M."/>
            <person name="Khan S."/>
            <person name="Koesema E."/>
            <person name="Ishida J."/>
            <person name="Jiang P.X."/>
            <person name="Jones T."/>
            <person name="Kawai J."/>
            <person name="Kamiya A."/>
            <person name="Meyers C."/>
            <person name="Nakajima M."/>
            <person name="Narusaka M."/>
            <person name="Seki M."/>
            <person name="Sakurai T."/>
            <person name="Satou M."/>
            <person name="Tamse R."/>
            <person name="Vaysberg M."/>
            <person name="Wallender E.K."/>
            <person name="Wong C."/>
            <person name="Yamamura Y."/>
            <person name="Yuan S."/>
            <person name="Shinozaki K."/>
            <person name="Davis R.W."/>
            <person name="Theologis A."/>
            <person name="Ecker J.R."/>
        </authorList>
    </citation>
    <scope>NUCLEOTIDE SEQUENCE [LARGE SCALE MRNA]</scope>
    <source>
        <strain>cv. Columbia</strain>
    </source>
</reference>
<reference key="4">
    <citation type="journal article" date="2009" name="FEBS Lett.">
        <title>Molecular and functional characterization of the plastid-localized Phosphoenolpyruvate enolase (ENO1) from Arabidopsis thaliana.</title>
        <authorList>
            <person name="Prabhakar V."/>
            <person name="Lottgert T."/>
            <person name="Gigolashvili T."/>
            <person name="Bell K."/>
            <person name="Flugge U.I."/>
            <person name="Hausler R.E."/>
        </authorList>
    </citation>
    <scope>SUBCELLULAR LOCATION</scope>
</reference>
<reference key="5">
    <citation type="journal article" date="2012" name="Mol. Cell. Proteomics">
        <title>Comparative large-scale characterisation of plant vs. mammal proteins reveals similar and idiosyncratic N-alpha acetylation features.</title>
        <authorList>
            <person name="Bienvenut W.V."/>
            <person name="Sumpton D."/>
            <person name="Martinez A."/>
            <person name="Lilla S."/>
            <person name="Espagne C."/>
            <person name="Meinnel T."/>
            <person name="Giglione C."/>
        </authorList>
    </citation>
    <scope>ACETYLATION [LARGE SCALE ANALYSIS] AT SER-2</scope>
    <scope>CLEAVAGE OF INITIATOR METHIONINE [LARGE SCALE ANALYSIS]</scope>
    <scope>IDENTIFICATION BY MASS SPECTROMETRY [LARGE SCALE ANALYSIS]</scope>
</reference>
<gene>
    <name type="primary">ENO3</name>
    <name type="synonym">ENOC</name>
    <name type="ordered locus">At2g29560</name>
    <name type="ORF">F16P2.6</name>
</gene>
<comment type="catalytic activity">
    <reaction>
        <text>(2R)-2-phosphoglycerate = phosphoenolpyruvate + H2O</text>
        <dbReference type="Rhea" id="RHEA:10164"/>
        <dbReference type="ChEBI" id="CHEBI:15377"/>
        <dbReference type="ChEBI" id="CHEBI:58289"/>
        <dbReference type="ChEBI" id="CHEBI:58702"/>
        <dbReference type="EC" id="4.2.1.11"/>
    </reaction>
</comment>
<comment type="cofactor">
    <cofactor evidence="1">
        <name>Mg(2+)</name>
        <dbReference type="ChEBI" id="CHEBI:18420"/>
    </cofactor>
    <text evidence="1">Mg(2+) is required for catalysis and for stabilizing the dimer.</text>
</comment>
<comment type="pathway">
    <text>Carbohydrate degradation; glycolysis; pyruvate from D-glyceraldehyde 3-phosphate: step 4/5.</text>
</comment>
<comment type="subunit">
    <text evidence="1">Homodimer.</text>
</comment>
<comment type="subcellular location">
    <subcellularLocation>
        <location evidence="2">Cytoplasm</location>
    </subcellularLocation>
    <subcellularLocation>
        <location evidence="2">Nucleus</location>
    </subcellularLocation>
</comment>
<comment type="similarity">
    <text evidence="3">Belongs to the enolase family.</text>
</comment>
<name>ENO3_ARATH</name>
<evidence type="ECO:0000250" key="1"/>
<evidence type="ECO:0000269" key="2">
    <source>
    </source>
</evidence>
<evidence type="ECO:0000305" key="3"/>
<evidence type="ECO:0007744" key="4">
    <source>
    </source>
</evidence>
<feature type="initiator methionine" description="Removed" evidence="4">
    <location>
        <position position="1"/>
    </location>
</feature>
<feature type="chain" id="PRO_0000399511" description="Cytosolic enolase 3">
    <location>
        <begin position="2"/>
        <end position="475"/>
    </location>
</feature>
<feature type="active site" description="Proton donor" evidence="1">
    <location>
        <position position="252"/>
    </location>
</feature>
<feature type="active site" description="Proton acceptor" evidence="1">
    <location>
        <position position="386"/>
    </location>
</feature>
<feature type="binding site" evidence="1">
    <location>
        <position position="200"/>
    </location>
    <ligand>
        <name>substrate</name>
    </ligand>
</feature>
<feature type="binding site" evidence="1">
    <location>
        <position position="209"/>
    </location>
    <ligand>
        <name>substrate</name>
    </ligand>
</feature>
<feature type="binding site" evidence="1">
    <location>
        <position position="287"/>
    </location>
    <ligand>
        <name>Mg(2+)</name>
        <dbReference type="ChEBI" id="CHEBI:18420"/>
    </ligand>
</feature>
<feature type="binding site" evidence="1">
    <location>
        <position position="336"/>
    </location>
    <ligand>
        <name>Mg(2+)</name>
        <dbReference type="ChEBI" id="CHEBI:18420"/>
    </ligand>
</feature>
<feature type="binding site" evidence="1">
    <location>
        <position position="336"/>
    </location>
    <ligand>
        <name>substrate</name>
    </ligand>
</feature>
<feature type="binding site" evidence="1">
    <location>
        <position position="361"/>
    </location>
    <ligand>
        <name>Mg(2+)</name>
        <dbReference type="ChEBI" id="CHEBI:18420"/>
    </ligand>
</feature>
<feature type="binding site" evidence="1">
    <location>
        <position position="361"/>
    </location>
    <ligand>
        <name>substrate</name>
    </ligand>
</feature>
<feature type="binding site" evidence="1">
    <location>
        <begin position="413"/>
        <end position="416"/>
    </location>
    <ligand>
        <name>substrate</name>
    </ligand>
</feature>
<feature type="binding site" evidence="1">
    <location>
        <position position="437"/>
    </location>
    <ligand>
        <name>substrate</name>
    </ligand>
</feature>
<feature type="modified residue" description="N-acetylserine" evidence="4">
    <location>
        <position position="2"/>
    </location>
</feature>
<keyword id="KW-0007">Acetylation</keyword>
<keyword id="KW-0963">Cytoplasm</keyword>
<keyword id="KW-0324">Glycolysis</keyword>
<keyword id="KW-0456">Lyase</keyword>
<keyword id="KW-0460">Magnesium</keyword>
<keyword id="KW-0479">Metal-binding</keyword>
<keyword id="KW-0539">Nucleus</keyword>
<keyword id="KW-1185">Reference proteome</keyword>